<evidence type="ECO:0000255" key="1">
    <source>
        <dbReference type="HAMAP-Rule" id="MF_02002"/>
    </source>
</evidence>
<organism>
    <name type="scientific">Bacillus cereus (strain ZK / E33L)</name>
    <dbReference type="NCBI Taxonomy" id="288681"/>
    <lineage>
        <taxon>Bacteria</taxon>
        <taxon>Bacillati</taxon>
        <taxon>Bacillota</taxon>
        <taxon>Bacilli</taxon>
        <taxon>Bacillales</taxon>
        <taxon>Bacillaceae</taxon>
        <taxon>Bacillus</taxon>
        <taxon>Bacillus cereus group</taxon>
    </lineage>
</organism>
<comment type="function">
    <text evidence="1">Catalyzes the attachment of isoleucine to tRNA(Ile). As IleRS can inadvertently accommodate and process structurally similar amino acids such as valine, to avoid such errors it has two additional distinct tRNA(Ile)-dependent editing activities. One activity is designated as 'pretransfer' editing and involves the hydrolysis of activated Val-AMP. The other activity is designated 'posttransfer' editing and involves deacylation of mischarged Val-tRNA(Ile).</text>
</comment>
<comment type="catalytic activity">
    <reaction evidence="1">
        <text>tRNA(Ile) + L-isoleucine + ATP = L-isoleucyl-tRNA(Ile) + AMP + diphosphate</text>
        <dbReference type="Rhea" id="RHEA:11060"/>
        <dbReference type="Rhea" id="RHEA-COMP:9666"/>
        <dbReference type="Rhea" id="RHEA-COMP:9695"/>
        <dbReference type="ChEBI" id="CHEBI:30616"/>
        <dbReference type="ChEBI" id="CHEBI:33019"/>
        <dbReference type="ChEBI" id="CHEBI:58045"/>
        <dbReference type="ChEBI" id="CHEBI:78442"/>
        <dbReference type="ChEBI" id="CHEBI:78528"/>
        <dbReference type="ChEBI" id="CHEBI:456215"/>
        <dbReference type="EC" id="6.1.1.5"/>
    </reaction>
</comment>
<comment type="cofactor">
    <cofactor evidence="1">
        <name>Zn(2+)</name>
        <dbReference type="ChEBI" id="CHEBI:29105"/>
    </cofactor>
    <text evidence="1">Binds 1 zinc ion per subunit.</text>
</comment>
<comment type="subunit">
    <text evidence="1">Monomer.</text>
</comment>
<comment type="subcellular location">
    <subcellularLocation>
        <location evidence="1">Cytoplasm</location>
    </subcellularLocation>
</comment>
<comment type="domain">
    <text evidence="1">IleRS has two distinct active sites: one for aminoacylation and one for editing. The misactivated valine is translocated from the active site to the editing site, which sterically excludes the correctly activated isoleucine. The single editing site contains two valyl binding pockets, one specific for each substrate (Val-AMP or Val-tRNA(Ile)).</text>
</comment>
<comment type="similarity">
    <text evidence="1">Belongs to the class-I aminoacyl-tRNA synthetase family. IleS type 1 subfamily.</text>
</comment>
<reference key="1">
    <citation type="journal article" date="2006" name="J. Bacteriol.">
        <title>Pathogenomic sequence analysis of Bacillus cereus and Bacillus thuringiensis isolates closely related to Bacillus anthracis.</title>
        <authorList>
            <person name="Han C.S."/>
            <person name="Xie G."/>
            <person name="Challacombe J.F."/>
            <person name="Altherr M.R."/>
            <person name="Bhotika S.S."/>
            <person name="Bruce D."/>
            <person name="Campbell C.S."/>
            <person name="Campbell M.L."/>
            <person name="Chen J."/>
            <person name="Chertkov O."/>
            <person name="Cleland C."/>
            <person name="Dimitrijevic M."/>
            <person name="Doggett N.A."/>
            <person name="Fawcett J.J."/>
            <person name="Glavina T."/>
            <person name="Goodwin L.A."/>
            <person name="Hill K.K."/>
            <person name="Hitchcock P."/>
            <person name="Jackson P.J."/>
            <person name="Keim P."/>
            <person name="Kewalramani A.R."/>
            <person name="Longmire J."/>
            <person name="Lucas S."/>
            <person name="Malfatti S."/>
            <person name="McMurry K."/>
            <person name="Meincke L.J."/>
            <person name="Misra M."/>
            <person name="Moseman B.L."/>
            <person name="Mundt M."/>
            <person name="Munk A.C."/>
            <person name="Okinaka R.T."/>
            <person name="Parson-Quintana B."/>
            <person name="Reilly L.P."/>
            <person name="Richardson P."/>
            <person name="Robinson D.L."/>
            <person name="Rubin E."/>
            <person name="Saunders E."/>
            <person name="Tapia R."/>
            <person name="Tesmer J.G."/>
            <person name="Thayer N."/>
            <person name="Thompson L.S."/>
            <person name="Tice H."/>
            <person name="Ticknor L.O."/>
            <person name="Wills P.L."/>
            <person name="Brettin T.S."/>
            <person name="Gilna P."/>
        </authorList>
    </citation>
    <scope>NUCLEOTIDE SEQUENCE [LARGE SCALE GENOMIC DNA]</scope>
    <source>
        <strain>ZK / E33L</strain>
    </source>
</reference>
<protein>
    <recommendedName>
        <fullName evidence="1">Isoleucine--tRNA ligase 1</fullName>
        <ecNumber evidence="1">6.1.1.5</ecNumber>
    </recommendedName>
    <alternativeName>
        <fullName evidence="1">Isoleucyl-tRNA synthetase 1</fullName>
        <shortName evidence="1">IleRS 1</shortName>
    </alternativeName>
</protein>
<accession>Q636D1</accession>
<sequence>MEYKNTLLMPKTEFPMRGNLPKREPAMQEKWAEMNIYEKVQEHTKGRPLFVLHDGPPYANGDIHMGHALNKVLKDFIVRYKSMTGFCAPYVPGWDTHGLPIEQALTNKGVKRKEMTVAEFRKLCAEYAYEQVERQREQFKRLGVRADWDNPYITLEPAYEAQQIKVFGDMAKKGYIYKGQKPVYWSPTSESALAEAEIEYQDKKSASIYVAFPVKDGKNVLEGDEKYIIWTTTPWTLPANLGISVHPELEYAIVKVNDEKYIIASELFETVAKTLEWENAEVVKTVKGSELEYTVAKHPFYDRDSLVMLGDHVTTDAGTGCVHTAPGHGEDDFIVGKKYGLEVLCPVDDKGVLTEEAPGFEGLFYDKANKPITEKLEEVGALLKLTFITHSYPHDWRTKKPIIFRATAQWFASIEAFRKELLEAVAETKWVPAWGETRLHNMVRDRGDWCISRQRAWGVPIPVFYAENGDPIITDETINHVADLFREHGSNVWFEREAKDLLPEGFTHQGSPNGEFRKETDIMDVWFDSGSSHQAVLEERDDLQRPADLYLEGSDQYRGWFNSSLSTAVAVTGKAPYKGVLSHGFVLDGEGRKMSKSIGNIVVPKKIMDQLGGDILRLWVSSVDYQSDVRISDDILKQVAEVYRKIRNTFRFLLGNLDDFKPSENTVAVAELREVDRYMLVKLNDLITKVKEAYETYDFAAVYHAIHNFCTIDLSSFYLDFAKDILYIEGANHEDRRAIQTVLYDVLVALTKLVTPILPHTADEVWPYIPGVTEESVQLTDMPEAVQLDGAEALKTKWDAFMTLRDDVLKALEVARNEKVIGKSLNASITLYPTAEMKAMLESINEDLKQLFIVSEYKLGGMMEEAPADAPKYEHTAVVVAQATGETCERCWVVSETIGKDAEHETLCERCATVVKENYVK</sequence>
<keyword id="KW-0030">Aminoacyl-tRNA synthetase</keyword>
<keyword id="KW-0067">ATP-binding</keyword>
<keyword id="KW-0963">Cytoplasm</keyword>
<keyword id="KW-0436">Ligase</keyword>
<keyword id="KW-0479">Metal-binding</keyword>
<keyword id="KW-0547">Nucleotide-binding</keyword>
<keyword id="KW-0648">Protein biosynthesis</keyword>
<keyword id="KW-0862">Zinc</keyword>
<dbReference type="EC" id="6.1.1.5" evidence="1"/>
<dbReference type="EMBL" id="CP000001">
    <property type="protein sequence ID" value="AAU16613.1"/>
    <property type="molecule type" value="Genomic_DNA"/>
</dbReference>
<dbReference type="RefSeq" id="WP_000455928.1">
    <property type="nucleotide sequence ID" value="NC_006274.1"/>
</dbReference>
<dbReference type="SMR" id="Q636D1"/>
<dbReference type="KEGG" id="bcz:BCE33L3654"/>
<dbReference type="PATRIC" id="fig|288681.22.peg.1757"/>
<dbReference type="Proteomes" id="UP000002612">
    <property type="component" value="Chromosome"/>
</dbReference>
<dbReference type="GO" id="GO:0005829">
    <property type="term" value="C:cytosol"/>
    <property type="evidence" value="ECO:0007669"/>
    <property type="project" value="TreeGrafter"/>
</dbReference>
<dbReference type="GO" id="GO:0002161">
    <property type="term" value="F:aminoacyl-tRNA deacylase activity"/>
    <property type="evidence" value="ECO:0007669"/>
    <property type="project" value="InterPro"/>
</dbReference>
<dbReference type="GO" id="GO:0005524">
    <property type="term" value="F:ATP binding"/>
    <property type="evidence" value="ECO:0007669"/>
    <property type="project" value="UniProtKB-UniRule"/>
</dbReference>
<dbReference type="GO" id="GO:0004822">
    <property type="term" value="F:isoleucine-tRNA ligase activity"/>
    <property type="evidence" value="ECO:0007669"/>
    <property type="project" value="UniProtKB-UniRule"/>
</dbReference>
<dbReference type="GO" id="GO:0000049">
    <property type="term" value="F:tRNA binding"/>
    <property type="evidence" value="ECO:0007669"/>
    <property type="project" value="InterPro"/>
</dbReference>
<dbReference type="GO" id="GO:0008270">
    <property type="term" value="F:zinc ion binding"/>
    <property type="evidence" value="ECO:0007669"/>
    <property type="project" value="UniProtKB-UniRule"/>
</dbReference>
<dbReference type="GO" id="GO:0006428">
    <property type="term" value="P:isoleucyl-tRNA aminoacylation"/>
    <property type="evidence" value="ECO:0007669"/>
    <property type="project" value="UniProtKB-UniRule"/>
</dbReference>
<dbReference type="CDD" id="cd07960">
    <property type="entry name" value="Anticodon_Ia_Ile_BEm"/>
    <property type="match status" value="1"/>
</dbReference>
<dbReference type="CDD" id="cd00818">
    <property type="entry name" value="IleRS_core"/>
    <property type="match status" value="1"/>
</dbReference>
<dbReference type="FunFam" id="1.10.10.830:FF:000001">
    <property type="entry name" value="Isoleucine--tRNA ligase"/>
    <property type="match status" value="1"/>
</dbReference>
<dbReference type="FunFam" id="1.10.730.20:FF:000001">
    <property type="entry name" value="Isoleucine--tRNA ligase"/>
    <property type="match status" value="1"/>
</dbReference>
<dbReference type="FunFam" id="3.40.50.620:FF:000152">
    <property type="entry name" value="Isoleucine--tRNA ligase"/>
    <property type="match status" value="1"/>
</dbReference>
<dbReference type="FunFam" id="3.90.740.10:FF:000006">
    <property type="entry name" value="Isoleucine--tRNA ligase"/>
    <property type="match status" value="1"/>
</dbReference>
<dbReference type="Gene3D" id="1.10.730.20">
    <property type="match status" value="1"/>
</dbReference>
<dbReference type="Gene3D" id="3.40.50.620">
    <property type="entry name" value="HUPs"/>
    <property type="match status" value="2"/>
</dbReference>
<dbReference type="Gene3D" id="1.10.10.830">
    <property type="entry name" value="Ile-tRNA synthetase CP2 domain-like"/>
    <property type="match status" value="1"/>
</dbReference>
<dbReference type="Gene3D" id="3.90.740.10">
    <property type="entry name" value="Valyl/Leucyl/Isoleucyl-tRNA synthetase, editing domain"/>
    <property type="match status" value="1"/>
</dbReference>
<dbReference type="HAMAP" id="MF_02002">
    <property type="entry name" value="Ile_tRNA_synth_type1"/>
    <property type="match status" value="1"/>
</dbReference>
<dbReference type="InterPro" id="IPR001412">
    <property type="entry name" value="aa-tRNA-synth_I_CS"/>
</dbReference>
<dbReference type="InterPro" id="IPR002300">
    <property type="entry name" value="aa-tRNA-synth_Ia"/>
</dbReference>
<dbReference type="InterPro" id="IPR033708">
    <property type="entry name" value="Anticodon_Ile_BEm"/>
</dbReference>
<dbReference type="InterPro" id="IPR002301">
    <property type="entry name" value="Ile-tRNA-ligase"/>
</dbReference>
<dbReference type="InterPro" id="IPR023585">
    <property type="entry name" value="Ile-tRNA-ligase_type1"/>
</dbReference>
<dbReference type="InterPro" id="IPR050081">
    <property type="entry name" value="Ile-tRNA_ligase"/>
</dbReference>
<dbReference type="InterPro" id="IPR013155">
    <property type="entry name" value="M/V/L/I-tRNA-synth_anticd-bd"/>
</dbReference>
<dbReference type="InterPro" id="IPR014729">
    <property type="entry name" value="Rossmann-like_a/b/a_fold"/>
</dbReference>
<dbReference type="InterPro" id="IPR009080">
    <property type="entry name" value="tRNAsynth_Ia_anticodon-bd"/>
</dbReference>
<dbReference type="InterPro" id="IPR009008">
    <property type="entry name" value="Val/Leu/Ile-tRNA-synth_edit"/>
</dbReference>
<dbReference type="InterPro" id="IPR010663">
    <property type="entry name" value="Znf_FPG/IleRS"/>
</dbReference>
<dbReference type="NCBIfam" id="TIGR00392">
    <property type="entry name" value="ileS"/>
    <property type="match status" value="1"/>
</dbReference>
<dbReference type="PANTHER" id="PTHR42765:SF1">
    <property type="entry name" value="ISOLEUCINE--TRNA LIGASE, MITOCHONDRIAL"/>
    <property type="match status" value="1"/>
</dbReference>
<dbReference type="PANTHER" id="PTHR42765">
    <property type="entry name" value="SOLEUCYL-TRNA SYNTHETASE"/>
    <property type="match status" value="1"/>
</dbReference>
<dbReference type="Pfam" id="PF08264">
    <property type="entry name" value="Anticodon_1"/>
    <property type="match status" value="1"/>
</dbReference>
<dbReference type="Pfam" id="PF00133">
    <property type="entry name" value="tRNA-synt_1"/>
    <property type="match status" value="1"/>
</dbReference>
<dbReference type="Pfam" id="PF06827">
    <property type="entry name" value="zf-FPG_IleRS"/>
    <property type="match status" value="1"/>
</dbReference>
<dbReference type="PRINTS" id="PR00984">
    <property type="entry name" value="TRNASYNTHILE"/>
</dbReference>
<dbReference type="SUPFAM" id="SSF47323">
    <property type="entry name" value="Anticodon-binding domain of a subclass of class I aminoacyl-tRNA synthetases"/>
    <property type="match status" value="1"/>
</dbReference>
<dbReference type="SUPFAM" id="SSF52374">
    <property type="entry name" value="Nucleotidylyl transferase"/>
    <property type="match status" value="1"/>
</dbReference>
<dbReference type="SUPFAM" id="SSF50677">
    <property type="entry name" value="ValRS/IleRS/LeuRS editing domain"/>
    <property type="match status" value="1"/>
</dbReference>
<dbReference type="PROSITE" id="PS00178">
    <property type="entry name" value="AA_TRNA_LIGASE_I"/>
    <property type="match status" value="1"/>
</dbReference>
<gene>
    <name evidence="1" type="primary">ileS1</name>
    <name type="ordered locus">BCE33L3654</name>
</gene>
<name>SYI1_BACCZ</name>
<proteinExistence type="inferred from homology"/>
<feature type="chain" id="PRO_0000098347" description="Isoleucine--tRNA ligase 1">
    <location>
        <begin position="1"/>
        <end position="921"/>
    </location>
</feature>
<feature type="short sequence motif" description="'HIGH' region">
    <location>
        <begin position="57"/>
        <end position="67"/>
    </location>
</feature>
<feature type="short sequence motif" description="'KMSKS' region">
    <location>
        <begin position="593"/>
        <end position="597"/>
    </location>
</feature>
<feature type="binding site" evidence="1">
    <location>
        <position position="552"/>
    </location>
    <ligand>
        <name>L-isoleucyl-5'-AMP</name>
        <dbReference type="ChEBI" id="CHEBI:178002"/>
    </ligand>
</feature>
<feature type="binding site" evidence="1">
    <location>
        <position position="596"/>
    </location>
    <ligand>
        <name>ATP</name>
        <dbReference type="ChEBI" id="CHEBI:30616"/>
    </ligand>
</feature>
<feature type="binding site" evidence="1">
    <location>
        <position position="888"/>
    </location>
    <ligand>
        <name>Zn(2+)</name>
        <dbReference type="ChEBI" id="CHEBI:29105"/>
    </ligand>
</feature>
<feature type="binding site" evidence="1">
    <location>
        <position position="891"/>
    </location>
    <ligand>
        <name>Zn(2+)</name>
        <dbReference type="ChEBI" id="CHEBI:29105"/>
    </ligand>
</feature>
<feature type="binding site" evidence="1">
    <location>
        <position position="908"/>
    </location>
    <ligand>
        <name>Zn(2+)</name>
        <dbReference type="ChEBI" id="CHEBI:29105"/>
    </ligand>
</feature>
<feature type="binding site" evidence="1">
    <location>
        <position position="911"/>
    </location>
    <ligand>
        <name>Zn(2+)</name>
        <dbReference type="ChEBI" id="CHEBI:29105"/>
    </ligand>
</feature>